<accession>Q14HZ9</accession>
<keyword id="KW-0131">Cell cycle</keyword>
<keyword id="KW-0132">Cell division</keyword>
<keyword id="KW-0574">Periplasm</keyword>
<keyword id="KW-0732">Signal</keyword>
<gene>
    <name evidence="1" type="primary">tolB</name>
    <name type="ordered locus">FTF0840</name>
</gene>
<evidence type="ECO:0000255" key="1">
    <source>
        <dbReference type="HAMAP-Rule" id="MF_00671"/>
    </source>
</evidence>
<reference key="1">
    <citation type="journal article" date="2007" name="PLoS ONE">
        <title>Genome sequencing shows that European isolates of Francisella tularensis subspecies tularensis are almost identical to US laboratory strain Schu S4.</title>
        <authorList>
            <person name="Chaudhuri R.R."/>
            <person name="Ren C.-P."/>
            <person name="Desmond L."/>
            <person name="Vincent G.A."/>
            <person name="Silman N.J."/>
            <person name="Brehm J.K."/>
            <person name="Elmore M.J."/>
            <person name="Hudson M.J."/>
            <person name="Forsman M."/>
            <person name="Isherwood K.E."/>
            <person name="Gurycova D."/>
            <person name="Minton N.P."/>
            <person name="Titball R.W."/>
            <person name="Pallen M.J."/>
            <person name="Vipond R."/>
        </authorList>
    </citation>
    <scope>NUCLEOTIDE SEQUENCE [LARGE SCALE GENOMIC DNA]</scope>
    <source>
        <strain>FSC 198</strain>
    </source>
</reference>
<proteinExistence type="inferred from homology"/>
<organism>
    <name type="scientific">Francisella tularensis subsp. tularensis (strain FSC 198)</name>
    <dbReference type="NCBI Taxonomy" id="393115"/>
    <lineage>
        <taxon>Bacteria</taxon>
        <taxon>Pseudomonadati</taxon>
        <taxon>Pseudomonadota</taxon>
        <taxon>Gammaproteobacteria</taxon>
        <taxon>Thiotrichales</taxon>
        <taxon>Francisellaceae</taxon>
        <taxon>Francisella</taxon>
    </lineage>
</organism>
<dbReference type="EMBL" id="AM286280">
    <property type="protein sequence ID" value="CAL08856.1"/>
    <property type="molecule type" value="Genomic_DNA"/>
</dbReference>
<dbReference type="SMR" id="Q14HZ9"/>
<dbReference type="KEGG" id="ftf:FTF0840"/>
<dbReference type="HOGENOM" id="CLU_047123_0_0_6"/>
<dbReference type="GO" id="GO:0042597">
    <property type="term" value="C:periplasmic space"/>
    <property type="evidence" value="ECO:0007669"/>
    <property type="project" value="UniProtKB-SubCell"/>
</dbReference>
<dbReference type="GO" id="GO:0051301">
    <property type="term" value="P:cell division"/>
    <property type="evidence" value="ECO:0007669"/>
    <property type="project" value="UniProtKB-UniRule"/>
</dbReference>
<dbReference type="GO" id="GO:0017038">
    <property type="term" value="P:protein import"/>
    <property type="evidence" value="ECO:0007669"/>
    <property type="project" value="InterPro"/>
</dbReference>
<dbReference type="Gene3D" id="2.120.10.30">
    <property type="entry name" value="TolB, C-terminal domain"/>
    <property type="match status" value="1"/>
</dbReference>
<dbReference type="Gene3D" id="3.40.50.10070">
    <property type="entry name" value="TolB, N-terminal domain"/>
    <property type="match status" value="1"/>
</dbReference>
<dbReference type="HAMAP" id="MF_00671">
    <property type="entry name" value="TolB"/>
    <property type="match status" value="1"/>
</dbReference>
<dbReference type="InterPro" id="IPR011042">
    <property type="entry name" value="6-blade_b-propeller_TolB-like"/>
</dbReference>
<dbReference type="InterPro" id="IPR011659">
    <property type="entry name" value="PD40"/>
</dbReference>
<dbReference type="InterPro" id="IPR014167">
    <property type="entry name" value="Tol-Pal_TolB"/>
</dbReference>
<dbReference type="PANTHER" id="PTHR36842:SF1">
    <property type="entry name" value="PROTEIN TOLB"/>
    <property type="match status" value="1"/>
</dbReference>
<dbReference type="PANTHER" id="PTHR36842">
    <property type="entry name" value="PROTEIN TOLB HOMOLOG"/>
    <property type="match status" value="1"/>
</dbReference>
<dbReference type="Pfam" id="PF07676">
    <property type="entry name" value="PD40"/>
    <property type="match status" value="3"/>
</dbReference>
<dbReference type="SUPFAM" id="SSF52964">
    <property type="entry name" value="TolB, N-terminal domain"/>
    <property type="match status" value="1"/>
</dbReference>
<dbReference type="SUPFAM" id="SSF69304">
    <property type="entry name" value="Tricorn protease N-terminal domain"/>
    <property type="match status" value="1"/>
</dbReference>
<protein>
    <recommendedName>
        <fullName evidence="1">Tol-Pal system protein TolB</fullName>
    </recommendedName>
</protein>
<sequence length="439" mass="48865">MRNGMRKIIAGVFIFVFLISNLYADLVAEVTTGVIQKPLVTVVSDNVVDQFPQQVNSVIVADLNHNAKLQANDTIKYEIKQKQNIPWKSLKSDYVVLTKYTNNSYNNYTVEVQILKRNDTSYLQAITYKNINVSLMRTLAHKISNYVYQKLTGNQGFFLTKLAYVKVSNPYARYGRLYELIISDYDGYNKHVVLRQTDNPIATPSWSNDGRYIVYSSYSGGSMGVYTLEIATGKVTRITNYKGINSSPSFSPDGKEIALALSKGYSDQTNIYIMNLSTKALKRITINGINTAPKFSPNGQSIVFTSDREGRPNIYVASVNSKYPQSSILSTKIHQAYEPNYTPDGKNIVFMNQSSRTSGTQIADFNLANGSVTNITNGKADSSPTVSPYGDMVAYISTNTRGYSSLDMVSLDGDNHFNIETADNGNILIQSPSWSPKNF</sequence>
<feature type="signal peptide" evidence="1">
    <location>
        <begin position="1"/>
        <end position="24"/>
    </location>
</feature>
<feature type="chain" id="PRO_0000259049" description="Tol-Pal system protein TolB" evidence="1">
    <location>
        <begin position="25"/>
        <end position="439"/>
    </location>
</feature>
<name>TOLB_FRAT1</name>
<comment type="function">
    <text evidence="1">Part of the Tol-Pal system, which plays a role in outer membrane invagination during cell division and is important for maintaining outer membrane integrity.</text>
</comment>
<comment type="subunit">
    <text evidence="1">The Tol-Pal system is composed of five core proteins: the inner membrane proteins TolA, TolQ and TolR, the periplasmic protein TolB and the outer membrane protein Pal. They form a network linking the inner and outer membranes and the peptidoglycan layer.</text>
</comment>
<comment type="subcellular location">
    <subcellularLocation>
        <location evidence="1">Periplasm</location>
    </subcellularLocation>
</comment>
<comment type="similarity">
    <text evidence="1">Belongs to the TolB family.</text>
</comment>